<keyword id="KW-0131">Cell cycle</keyword>
<keyword id="KW-0132">Cell division</keyword>
<keyword id="KW-0137">Centromere</keyword>
<keyword id="KW-0158">Chromosome</keyword>
<keyword id="KW-0175">Coiled coil</keyword>
<keyword id="KW-0995">Kinetochore</keyword>
<keyword id="KW-0469">Meiosis</keyword>
<keyword id="KW-0498">Mitosis</keyword>
<keyword id="KW-0539">Nucleus</keyword>
<keyword id="KW-1185">Reference proteome</keyword>
<gene>
    <name evidence="2" type="primary">Spc25</name>
    <name type="ORF">GA20206</name>
</gene>
<feature type="chain" id="PRO_0000392424" description="Kinetochore protein Spc25">
    <location>
        <begin position="1"/>
        <end position="235"/>
    </location>
</feature>
<feature type="region of interest" description="Disordered" evidence="4">
    <location>
        <begin position="193"/>
        <end position="216"/>
    </location>
</feature>
<feature type="coiled-coil region" evidence="3">
    <location>
        <begin position="44"/>
        <end position="106"/>
    </location>
</feature>
<dbReference type="EMBL" id="CM000070">
    <property type="protein sequence ID" value="EAL27655.4"/>
    <property type="molecule type" value="Genomic_DNA"/>
</dbReference>
<dbReference type="SMR" id="Q299P8"/>
<dbReference type="FunCoup" id="Q299P8">
    <property type="interactions" value="63"/>
</dbReference>
<dbReference type="STRING" id="46245.Q299P8"/>
<dbReference type="eggNOG" id="ENOG502RVT8">
    <property type="taxonomic scope" value="Eukaryota"/>
</dbReference>
<dbReference type="InParanoid" id="Q299P8"/>
<dbReference type="Proteomes" id="UP000001819">
    <property type="component" value="Unplaced"/>
</dbReference>
<dbReference type="GO" id="GO:0031262">
    <property type="term" value="C:Ndc80 complex"/>
    <property type="evidence" value="ECO:0000250"/>
    <property type="project" value="UniProtKB"/>
</dbReference>
<dbReference type="GO" id="GO:0005634">
    <property type="term" value="C:nucleus"/>
    <property type="evidence" value="ECO:0007669"/>
    <property type="project" value="UniProtKB-SubCell"/>
</dbReference>
<dbReference type="GO" id="GO:0051301">
    <property type="term" value="P:cell division"/>
    <property type="evidence" value="ECO:0007669"/>
    <property type="project" value="UniProtKB-KW"/>
</dbReference>
<dbReference type="GO" id="GO:0051311">
    <property type="term" value="P:meiotic metaphase chromosome alignment"/>
    <property type="evidence" value="ECO:0000250"/>
    <property type="project" value="UniProtKB"/>
</dbReference>
<dbReference type="GO" id="GO:0000212">
    <property type="term" value="P:meiotic spindle organization"/>
    <property type="evidence" value="ECO:0000250"/>
    <property type="project" value="UniProtKB"/>
</dbReference>
<dbReference type="GO" id="GO:0007080">
    <property type="term" value="P:mitotic metaphase chromosome alignment"/>
    <property type="evidence" value="ECO:0000250"/>
    <property type="project" value="UniProtKB"/>
</dbReference>
<protein>
    <recommendedName>
        <fullName evidence="2">Kinetochore protein Spc25</fullName>
    </recommendedName>
</protein>
<comment type="function">
    <text evidence="1 2">Acts as a component of the essential kinetochore-associated Ndc80 complex, which is required for chromosome segregation and spindle checkpoint activity during meiosis and mitosis. Required for kinetochore integrity and the organization of stable microtubule binding sites in the outer plate of the kinetochore. Participates in SAC signaling that responds specifically to disruptions in spindle microtubule dynamics. The NDC80 complex synergistically enhances the affinity of the SKA1 complex for microtubules and may allow the NDC80 complex to track depolymerizing microtubules.</text>
</comment>
<comment type="subunit">
    <text evidence="2">Component of the Ndc80 complex, which is composed of Ndc80, Nuf2 and Spc25.</text>
</comment>
<comment type="subcellular location">
    <subcellularLocation>
        <location evidence="2">Nucleus</location>
    </subcellularLocation>
    <subcellularLocation>
        <location evidence="2">Chromosome</location>
        <location evidence="2">Centromere</location>
        <location evidence="2">Kinetochore</location>
    </subcellularLocation>
</comment>
<comment type="similarity">
    <text evidence="3">Belongs to the SPC25 family.</text>
</comment>
<organism>
    <name type="scientific">Drosophila pseudoobscura pseudoobscura</name>
    <name type="common">Fruit fly</name>
    <dbReference type="NCBI Taxonomy" id="46245"/>
    <lineage>
        <taxon>Eukaryota</taxon>
        <taxon>Metazoa</taxon>
        <taxon>Ecdysozoa</taxon>
        <taxon>Arthropoda</taxon>
        <taxon>Hexapoda</taxon>
        <taxon>Insecta</taxon>
        <taxon>Pterygota</taxon>
        <taxon>Neoptera</taxon>
        <taxon>Endopterygota</taxon>
        <taxon>Diptera</taxon>
        <taxon>Brachycera</taxon>
        <taxon>Muscomorpha</taxon>
        <taxon>Ephydroidea</taxon>
        <taxon>Drosophilidae</taxon>
        <taxon>Drosophila</taxon>
        <taxon>Sophophora</taxon>
    </lineage>
</organism>
<proteinExistence type="inferred from homology"/>
<name>SPC25_DROPS</name>
<sequence>MTDLKASEGDLSDYYMRLKKIFSNETRLQSREASISKRSSRVHKNILSAKEAIERQERDFGKLQKVLLNRNQELERRFTLGEALAQQLEVTRQRNADMEAQLLRHTTEGRQRSNELMECMHSLKQATGTYINHEAFPARLNGVSVVRADDGDIKLIPFSLDGNDADGLHTLWRSLHTRTDNASKWRKLISDQEVAGASPVTPSGSERPKATSKHSNFMPTSIIEIDLTSPTNDAS</sequence>
<reference key="1">
    <citation type="journal article" date="2005" name="Genome Res.">
        <title>Comparative genome sequencing of Drosophila pseudoobscura: chromosomal, gene, and cis-element evolution.</title>
        <authorList>
            <person name="Richards S."/>
            <person name="Liu Y."/>
            <person name="Bettencourt B.R."/>
            <person name="Hradecky P."/>
            <person name="Letovsky S."/>
            <person name="Nielsen R."/>
            <person name="Thornton K."/>
            <person name="Hubisz M.J."/>
            <person name="Chen R."/>
            <person name="Meisel R.P."/>
            <person name="Couronne O."/>
            <person name="Hua S."/>
            <person name="Smith M.A."/>
            <person name="Zhang P."/>
            <person name="Liu J."/>
            <person name="Bussemaker H.J."/>
            <person name="van Batenburg M.F."/>
            <person name="Howells S.L."/>
            <person name="Scherer S.E."/>
            <person name="Sodergren E."/>
            <person name="Matthews B.B."/>
            <person name="Crosby M.A."/>
            <person name="Schroeder A.J."/>
            <person name="Ortiz-Barrientos D."/>
            <person name="Rives C.M."/>
            <person name="Metzker M.L."/>
            <person name="Muzny D.M."/>
            <person name="Scott G."/>
            <person name="Steffen D."/>
            <person name="Wheeler D.A."/>
            <person name="Worley K.C."/>
            <person name="Havlak P."/>
            <person name="Durbin K.J."/>
            <person name="Egan A."/>
            <person name="Gill R."/>
            <person name="Hume J."/>
            <person name="Morgan M.B."/>
            <person name="Miner G."/>
            <person name="Hamilton C."/>
            <person name="Huang Y."/>
            <person name="Waldron L."/>
            <person name="Verduzco D."/>
            <person name="Clerc-Blankenburg K.P."/>
            <person name="Dubchak I."/>
            <person name="Noor M.A.F."/>
            <person name="Anderson W."/>
            <person name="White K.P."/>
            <person name="Clark A.G."/>
            <person name="Schaeffer S.W."/>
            <person name="Gelbart W.M."/>
            <person name="Weinstock G.M."/>
            <person name="Gibbs R.A."/>
        </authorList>
    </citation>
    <scope>NUCLEOTIDE SEQUENCE [LARGE SCALE GENOMIC DNA]</scope>
    <source>
        <strain>MV2-25 / Tucson 14011-0121.94</strain>
    </source>
</reference>
<accession>Q299P8</accession>
<evidence type="ECO:0000250" key="1">
    <source>
        <dbReference type="UniProtKB" id="Q9HBM1"/>
    </source>
</evidence>
<evidence type="ECO:0000250" key="2">
    <source>
        <dbReference type="UniProtKB" id="Q9V3V7"/>
    </source>
</evidence>
<evidence type="ECO:0000255" key="3"/>
<evidence type="ECO:0000256" key="4">
    <source>
        <dbReference type="SAM" id="MobiDB-lite"/>
    </source>
</evidence>